<protein>
    <recommendedName>
        <fullName evidence="1">Large ribosomal subunit protein uL30</fullName>
    </recommendedName>
    <alternativeName>
        <fullName evidence="2">50S ribosomal protein L30</fullName>
    </alternativeName>
</protein>
<proteinExistence type="inferred from homology"/>
<organism>
    <name type="scientific">Porphyromonas gingivalis (strain ATCC BAA-308 / W83)</name>
    <dbReference type="NCBI Taxonomy" id="242619"/>
    <lineage>
        <taxon>Bacteria</taxon>
        <taxon>Pseudomonadati</taxon>
        <taxon>Bacteroidota</taxon>
        <taxon>Bacteroidia</taxon>
        <taxon>Bacteroidales</taxon>
        <taxon>Porphyromonadaceae</taxon>
        <taxon>Porphyromonas</taxon>
    </lineage>
</organism>
<evidence type="ECO:0000255" key="1">
    <source>
        <dbReference type="HAMAP-Rule" id="MF_01371"/>
    </source>
</evidence>
<evidence type="ECO:0000305" key="2"/>
<reference key="1">
    <citation type="journal article" date="2003" name="J. Bacteriol.">
        <title>Complete genome sequence of the oral pathogenic bacterium Porphyromonas gingivalis strain W83.</title>
        <authorList>
            <person name="Nelson K.E."/>
            <person name="Fleischmann R.D."/>
            <person name="DeBoy R.T."/>
            <person name="Paulsen I.T."/>
            <person name="Fouts D.E."/>
            <person name="Eisen J.A."/>
            <person name="Daugherty S.C."/>
            <person name="Dodson R.J."/>
            <person name="Durkin A.S."/>
            <person name="Gwinn M.L."/>
            <person name="Haft D.H."/>
            <person name="Kolonay J.F."/>
            <person name="Nelson W.C."/>
            <person name="Mason T.M."/>
            <person name="Tallon L."/>
            <person name="Gray J."/>
            <person name="Granger D."/>
            <person name="Tettelin H."/>
            <person name="Dong H."/>
            <person name="Galvin J.L."/>
            <person name="Duncan M.J."/>
            <person name="Dewhirst F.E."/>
            <person name="Fraser C.M."/>
        </authorList>
    </citation>
    <scope>NUCLEOTIDE SEQUENCE [LARGE SCALE GENOMIC DNA]</scope>
    <source>
        <strain>ATCC BAA-308 / W83</strain>
    </source>
</reference>
<accession>Q7MTN1</accession>
<feature type="chain" id="PRO_1000056091" description="Large ribosomal subunit protein uL30">
    <location>
        <begin position="1"/>
        <end position="58"/>
    </location>
</feature>
<keyword id="KW-1185">Reference proteome</keyword>
<keyword id="KW-0687">Ribonucleoprotein</keyword>
<keyword id="KW-0689">Ribosomal protein</keyword>
<comment type="subunit">
    <text evidence="1">Part of the 50S ribosomal subunit.</text>
</comment>
<comment type="similarity">
    <text evidence="1">Belongs to the universal ribosomal protein uL30 family.</text>
</comment>
<dbReference type="EMBL" id="AE015924">
    <property type="protein sequence ID" value="AAQ66901.1"/>
    <property type="molecule type" value="Genomic_DNA"/>
</dbReference>
<dbReference type="RefSeq" id="WP_010956442.1">
    <property type="nucleotide sequence ID" value="NC_002950.2"/>
</dbReference>
<dbReference type="SMR" id="Q7MTN1"/>
<dbReference type="STRING" id="242619.PG_1920"/>
<dbReference type="EnsemblBacteria" id="AAQ66901">
    <property type="protein sequence ID" value="AAQ66901"/>
    <property type="gene ID" value="PG_1920"/>
</dbReference>
<dbReference type="GeneID" id="29257001"/>
<dbReference type="GeneID" id="57239578"/>
<dbReference type="KEGG" id="pgi:PG_1920"/>
<dbReference type="eggNOG" id="COG1841">
    <property type="taxonomic scope" value="Bacteria"/>
</dbReference>
<dbReference type="HOGENOM" id="CLU_131047_1_1_10"/>
<dbReference type="Proteomes" id="UP000000588">
    <property type="component" value="Chromosome"/>
</dbReference>
<dbReference type="GO" id="GO:0022625">
    <property type="term" value="C:cytosolic large ribosomal subunit"/>
    <property type="evidence" value="ECO:0007669"/>
    <property type="project" value="TreeGrafter"/>
</dbReference>
<dbReference type="GO" id="GO:0003735">
    <property type="term" value="F:structural constituent of ribosome"/>
    <property type="evidence" value="ECO:0007669"/>
    <property type="project" value="InterPro"/>
</dbReference>
<dbReference type="GO" id="GO:0006412">
    <property type="term" value="P:translation"/>
    <property type="evidence" value="ECO:0007669"/>
    <property type="project" value="UniProtKB-UniRule"/>
</dbReference>
<dbReference type="CDD" id="cd01658">
    <property type="entry name" value="Ribosomal_L30"/>
    <property type="match status" value="1"/>
</dbReference>
<dbReference type="FunFam" id="3.30.1390.20:FF:000001">
    <property type="entry name" value="50S ribosomal protein L30"/>
    <property type="match status" value="1"/>
</dbReference>
<dbReference type="Gene3D" id="3.30.1390.20">
    <property type="entry name" value="Ribosomal protein L30, ferredoxin-like fold domain"/>
    <property type="match status" value="1"/>
</dbReference>
<dbReference type="HAMAP" id="MF_01371_B">
    <property type="entry name" value="Ribosomal_uL30_B"/>
    <property type="match status" value="1"/>
</dbReference>
<dbReference type="InterPro" id="IPR036919">
    <property type="entry name" value="Ribo_uL30_ferredoxin-like_sf"/>
</dbReference>
<dbReference type="InterPro" id="IPR005996">
    <property type="entry name" value="Ribosomal_uL30_bac-type"/>
</dbReference>
<dbReference type="InterPro" id="IPR018038">
    <property type="entry name" value="Ribosomal_uL30_CS"/>
</dbReference>
<dbReference type="InterPro" id="IPR016082">
    <property type="entry name" value="Ribosomal_uL30_ferredoxin-like"/>
</dbReference>
<dbReference type="NCBIfam" id="TIGR01308">
    <property type="entry name" value="rpmD_bact"/>
    <property type="match status" value="1"/>
</dbReference>
<dbReference type="PANTHER" id="PTHR15892:SF2">
    <property type="entry name" value="LARGE RIBOSOMAL SUBUNIT PROTEIN UL30M"/>
    <property type="match status" value="1"/>
</dbReference>
<dbReference type="PANTHER" id="PTHR15892">
    <property type="entry name" value="MITOCHONDRIAL RIBOSOMAL PROTEIN L30"/>
    <property type="match status" value="1"/>
</dbReference>
<dbReference type="Pfam" id="PF00327">
    <property type="entry name" value="Ribosomal_L30"/>
    <property type="match status" value="1"/>
</dbReference>
<dbReference type="PIRSF" id="PIRSF002211">
    <property type="entry name" value="Ribosomal_L30_bac-type"/>
    <property type="match status" value="1"/>
</dbReference>
<dbReference type="SUPFAM" id="SSF55129">
    <property type="entry name" value="Ribosomal protein L30p/L7e"/>
    <property type="match status" value="1"/>
</dbReference>
<dbReference type="PROSITE" id="PS00634">
    <property type="entry name" value="RIBOSOMAL_L30"/>
    <property type="match status" value="1"/>
</dbReference>
<name>RL30_PORGI</name>
<sequence>MAKIKIQQVRSRIRCPKDQKRTLDALGLRKLNQIVEHEATPSILGMVNKVRHLVLIVE</sequence>
<gene>
    <name evidence="1" type="primary">rpmD</name>
    <name type="ordered locus">PG_1920</name>
</gene>